<organism>
    <name type="scientific">Halorubrum lacusprofundi (strain ATCC 49239 / DSM 5036 / JCM 8891 / ACAM 34)</name>
    <dbReference type="NCBI Taxonomy" id="416348"/>
    <lineage>
        <taxon>Archaea</taxon>
        <taxon>Methanobacteriati</taxon>
        <taxon>Methanobacteriota</taxon>
        <taxon>Stenosarchaea group</taxon>
        <taxon>Halobacteria</taxon>
        <taxon>Halobacteriales</taxon>
        <taxon>Haloferacaceae</taxon>
        <taxon>Halorubrum</taxon>
    </lineage>
</organism>
<protein>
    <recommendedName>
        <fullName evidence="1">Serine--tRNA ligase</fullName>
        <ecNumber evidence="1">6.1.1.11</ecNumber>
    </recommendedName>
    <alternativeName>
        <fullName evidence="1">Seryl-tRNA synthetase</fullName>
        <shortName evidence="1">SerRS</shortName>
    </alternativeName>
    <alternativeName>
        <fullName evidence="1">Seryl-tRNA(Ser/Sec) synthetase</fullName>
    </alternativeName>
</protein>
<evidence type="ECO:0000255" key="1">
    <source>
        <dbReference type="HAMAP-Rule" id="MF_00176"/>
    </source>
</evidence>
<evidence type="ECO:0000256" key="2">
    <source>
        <dbReference type="SAM" id="MobiDB-lite"/>
    </source>
</evidence>
<gene>
    <name evidence="1" type="primary">serS</name>
    <name type="ordered locus">Hlac_2073</name>
</gene>
<reference key="1">
    <citation type="journal article" date="2016" name="Stand. Genomic Sci.">
        <title>Complete genome sequence of the Antarctic Halorubrum lacusprofundi type strain ACAM 34.</title>
        <authorList>
            <person name="Anderson I.J."/>
            <person name="DasSarma P."/>
            <person name="Lucas S."/>
            <person name="Copeland A."/>
            <person name="Lapidus A."/>
            <person name="Del Rio T.G."/>
            <person name="Tice H."/>
            <person name="Dalin E."/>
            <person name="Bruce D.C."/>
            <person name="Goodwin L."/>
            <person name="Pitluck S."/>
            <person name="Sims D."/>
            <person name="Brettin T.S."/>
            <person name="Detter J.C."/>
            <person name="Han C.S."/>
            <person name="Larimer F."/>
            <person name="Hauser L."/>
            <person name="Land M."/>
            <person name="Ivanova N."/>
            <person name="Richardson P."/>
            <person name="Cavicchioli R."/>
            <person name="DasSarma S."/>
            <person name="Woese C.R."/>
            <person name="Kyrpides N.C."/>
        </authorList>
    </citation>
    <scope>NUCLEOTIDE SEQUENCE [LARGE SCALE GENOMIC DNA]</scope>
    <source>
        <strain>ATCC 49239 / DSM 5036 / JCM 8891 / ACAM 34</strain>
    </source>
</reference>
<accession>B9LQZ7</accession>
<sequence length="456" mass="51888">MLSRQFVRENPEVVREALDNKGVDVDLDRILDVDEEWRELKSRGDDLRHERNEVSSTIGELKQAGEEEAAQEAIERSQEVKSELQEIEERADELEAELEESLLELPQIPHESVPVGADESENVERRREGFDDLREVPDNVEPHYDLGEELEILDFERGAKVAGGGFYVAKGDGARLEHALIQFMLDVHREQDYRDVFPPIAVNSTSMRGTGQLPKFTEDAYRIEGTNEDAYDDDDLWLLPTAEVPVTNLHRDEILLGEDLPLKYQAYTPNFRQEAGEHGTETRGIVRVHQFNKVEMVNFVRPEESHERFEGLVDEAEEVLRRLELPYRILEMCTGDLGFTQAKKYDLEVWAPADDMDEGPAEGGRWLEVSSVSNFEEFQARRAGIRYREEHHESAEFLHTLNGSGLAVPRIVVAILEYYQNDDGTVTVPEALRPYMGGTEVIEGHDAVGETKLGGE</sequence>
<comment type="function">
    <text evidence="1">Catalyzes the attachment of serine to tRNA(Ser). Is also able to aminoacylate tRNA(Sec) with serine, to form the misacylated tRNA L-seryl-tRNA(Sec), which will be further converted into selenocysteinyl-tRNA(Sec).</text>
</comment>
<comment type="catalytic activity">
    <reaction evidence="1">
        <text>tRNA(Ser) + L-serine + ATP = L-seryl-tRNA(Ser) + AMP + diphosphate + H(+)</text>
        <dbReference type="Rhea" id="RHEA:12292"/>
        <dbReference type="Rhea" id="RHEA-COMP:9669"/>
        <dbReference type="Rhea" id="RHEA-COMP:9703"/>
        <dbReference type="ChEBI" id="CHEBI:15378"/>
        <dbReference type="ChEBI" id="CHEBI:30616"/>
        <dbReference type="ChEBI" id="CHEBI:33019"/>
        <dbReference type="ChEBI" id="CHEBI:33384"/>
        <dbReference type="ChEBI" id="CHEBI:78442"/>
        <dbReference type="ChEBI" id="CHEBI:78533"/>
        <dbReference type="ChEBI" id="CHEBI:456215"/>
        <dbReference type="EC" id="6.1.1.11"/>
    </reaction>
</comment>
<comment type="catalytic activity">
    <reaction evidence="1">
        <text>tRNA(Sec) + L-serine + ATP = L-seryl-tRNA(Sec) + AMP + diphosphate + H(+)</text>
        <dbReference type="Rhea" id="RHEA:42580"/>
        <dbReference type="Rhea" id="RHEA-COMP:9742"/>
        <dbReference type="Rhea" id="RHEA-COMP:10128"/>
        <dbReference type="ChEBI" id="CHEBI:15378"/>
        <dbReference type="ChEBI" id="CHEBI:30616"/>
        <dbReference type="ChEBI" id="CHEBI:33019"/>
        <dbReference type="ChEBI" id="CHEBI:33384"/>
        <dbReference type="ChEBI" id="CHEBI:78442"/>
        <dbReference type="ChEBI" id="CHEBI:78533"/>
        <dbReference type="ChEBI" id="CHEBI:456215"/>
        <dbReference type="EC" id="6.1.1.11"/>
    </reaction>
</comment>
<comment type="pathway">
    <text evidence="1">Aminoacyl-tRNA biosynthesis; selenocysteinyl-tRNA(Sec) biosynthesis; L-seryl-tRNA(Sec) from L-serine and tRNA(Sec): step 1/1.</text>
</comment>
<comment type="subunit">
    <text evidence="1">Homodimer. The tRNA molecule binds across the dimer.</text>
</comment>
<comment type="subcellular location">
    <subcellularLocation>
        <location evidence="1">Cytoplasm</location>
    </subcellularLocation>
</comment>
<comment type="domain">
    <text evidence="1">Consists of two distinct domains, a catalytic core and a N-terminal extension that is involved in tRNA binding.</text>
</comment>
<comment type="similarity">
    <text evidence="1">Belongs to the class-II aminoacyl-tRNA synthetase family. Type-1 seryl-tRNA synthetase subfamily.</text>
</comment>
<feature type="chain" id="PRO_1000199519" description="Serine--tRNA ligase">
    <location>
        <begin position="1"/>
        <end position="456"/>
    </location>
</feature>
<feature type="region of interest" description="Disordered" evidence="2">
    <location>
        <begin position="49"/>
        <end position="69"/>
    </location>
</feature>
<feature type="binding site" evidence="1">
    <location>
        <begin position="241"/>
        <end position="243"/>
    </location>
    <ligand>
        <name>L-serine</name>
        <dbReference type="ChEBI" id="CHEBI:33384"/>
    </ligand>
</feature>
<feature type="binding site" evidence="1">
    <location>
        <begin position="272"/>
        <end position="274"/>
    </location>
    <ligand>
        <name>ATP</name>
        <dbReference type="ChEBI" id="CHEBI:30616"/>
    </ligand>
</feature>
<feature type="binding site" evidence="1">
    <location>
        <position position="288"/>
    </location>
    <ligand>
        <name>ATP</name>
        <dbReference type="ChEBI" id="CHEBI:30616"/>
    </ligand>
</feature>
<feature type="binding site" evidence="1">
    <location>
        <position position="295"/>
    </location>
    <ligand>
        <name>L-serine</name>
        <dbReference type="ChEBI" id="CHEBI:33384"/>
    </ligand>
</feature>
<feature type="binding site" evidence="1">
    <location>
        <begin position="368"/>
        <end position="371"/>
    </location>
    <ligand>
        <name>ATP</name>
        <dbReference type="ChEBI" id="CHEBI:30616"/>
    </ligand>
</feature>
<feature type="binding site" evidence="1">
    <location>
        <position position="404"/>
    </location>
    <ligand>
        <name>L-serine</name>
        <dbReference type="ChEBI" id="CHEBI:33384"/>
    </ligand>
</feature>
<name>SYS_HALLT</name>
<keyword id="KW-0030">Aminoacyl-tRNA synthetase</keyword>
<keyword id="KW-0067">ATP-binding</keyword>
<keyword id="KW-0963">Cytoplasm</keyword>
<keyword id="KW-0436">Ligase</keyword>
<keyword id="KW-0547">Nucleotide-binding</keyword>
<keyword id="KW-0648">Protein biosynthesis</keyword>
<keyword id="KW-1185">Reference proteome</keyword>
<dbReference type="EC" id="6.1.1.11" evidence="1"/>
<dbReference type="EMBL" id="CP001365">
    <property type="protein sequence ID" value="ACM57651.1"/>
    <property type="molecule type" value="Genomic_DNA"/>
</dbReference>
<dbReference type="RefSeq" id="WP_015910776.1">
    <property type="nucleotide sequence ID" value="NC_012029.1"/>
</dbReference>
<dbReference type="SMR" id="B9LQZ7"/>
<dbReference type="GeneID" id="7400593"/>
<dbReference type="KEGG" id="hla:Hlac_2073"/>
<dbReference type="eggNOG" id="arCOG00403">
    <property type="taxonomic scope" value="Archaea"/>
</dbReference>
<dbReference type="HOGENOM" id="CLU_023797_0_1_2"/>
<dbReference type="UniPathway" id="UPA00906">
    <property type="reaction ID" value="UER00895"/>
</dbReference>
<dbReference type="Proteomes" id="UP000000740">
    <property type="component" value="Chromosome 1"/>
</dbReference>
<dbReference type="GO" id="GO:0005737">
    <property type="term" value="C:cytoplasm"/>
    <property type="evidence" value="ECO:0007669"/>
    <property type="project" value="UniProtKB-SubCell"/>
</dbReference>
<dbReference type="GO" id="GO:0005524">
    <property type="term" value="F:ATP binding"/>
    <property type="evidence" value="ECO:0007669"/>
    <property type="project" value="UniProtKB-UniRule"/>
</dbReference>
<dbReference type="GO" id="GO:0004828">
    <property type="term" value="F:serine-tRNA ligase activity"/>
    <property type="evidence" value="ECO:0007669"/>
    <property type="project" value="UniProtKB-UniRule"/>
</dbReference>
<dbReference type="GO" id="GO:0016260">
    <property type="term" value="P:selenocysteine biosynthetic process"/>
    <property type="evidence" value="ECO:0007669"/>
    <property type="project" value="UniProtKB-UniRule"/>
</dbReference>
<dbReference type="GO" id="GO:0006434">
    <property type="term" value="P:seryl-tRNA aminoacylation"/>
    <property type="evidence" value="ECO:0007669"/>
    <property type="project" value="UniProtKB-UniRule"/>
</dbReference>
<dbReference type="CDD" id="cd00770">
    <property type="entry name" value="SerRS_core"/>
    <property type="match status" value="1"/>
</dbReference>
<dbReference type="Gene3D" id="3.30.930.10">
    <property type="entry name" value="Bira Bifunctional Protein, Domain 2"/>
    <property type="match status" value="1"/>
</dbReference>
<dbReference type="Gene3D" id="1.10.287.40">
    <property type="entry name" value="Serine-tRNA synthetase, tRNA binding domain"/>
    <property type="match status" value="1"/>
</dbReference>
<dbReference type="HAMAP" id="MF_00176">
    <property type="entry name" value="Ser_tRNA_synth_type1"/>
    <property type="match status" value="1"/>
</dbReference>
<dbReference type="InterPro" id="IPR002314">
    <property type="entry name" value="aa-tRNA-synt_IIb"/>
</dbReference>
<dbReference type="InterPro" id="IPR006195">
    <property type="entry name" value="aa-tRNA-synth_II"/>
</dbReference>
<dbReference type="InterPro" id="IPR045864">
    <property type="entry name" value="aa-tRNA-synth_II/BPL/LPL"/>
</dbReference>
<dbReference type="InterPro" id="IPR002317">
    <property type="entry name" value="Ser-tRNA-ligase_type_1"/>
</dbReference>
<dbReference type="InterPro" id="IPR015866">
    <property type="entry name" value="Ser-tRNA-synth_1_N"/>
</dbReference>
<dbReference type="InterPro" id="IPR042103">
    <property type="entry name" value="SerRS_1_N_sf"/>
</dbReference>
<dbReference type="InterPro" id="IPR033729">
    <property type="entry name" value="SerRS_core"/>
</dbReference>
<dbReference type="InterPro" id="IPR010978">
    <property type="entry name" value="tRNA-bd_arm"/>
</dbReference>
<dbReference type="NCBIfam" id="TIGR00414">
    <property type="entry name" value="serS"/>
    <property type="match status" value="1"/>
</dbReference>
<dbReference type="PANTHER" id="PTHR43697:SF1">
    <property type="entry name" value="SERINE--TRNA LIGASE"/>
    <property type="match status" value="1"/>
</dbReference>
<dbReference type="PANTHER" id="PTHR43697">
    <property type="entry name" value="SERYL-TRNA SYNTHETASE"/>
    <property type="match status" value="1"/>
</dbReference>
<dbReference type="Pfam" id="PF02403">
    <property type="entry name" value="Seryl_tRNA_N"/>
    <property type="match status" value="1"/>
</dbReference>
<dbReference type="Pfam" id="PF00587">
    <property type="entry name" value="tRNA-synt_2b"/>
    <property type="match status" value="1"/>
</dbReference>
<dbReference type="PIRSF" id="PIRSF001529">
    <property type="entry name" value="Ser-tRNA-synth_IIa"/>
    <property type="match status" value="1"/>
</dbReference>
<dbReference type="PRINTS" id="PR00981">
    <property type="entry name" value="TRNASYNTHSER"/>
</dbReference>
<dbReference type="SUPFAM" id="SSF55681">
    <property type="entry name" value="Class II aaRS and biotin synthetases"/>
    <property type="match status" value="1"/>
</dbReference>
<dbReference type="SUPFAM" id="SSF46589">
    <property type="entry name" value="tRNA-binding arm"/>
    <property type="match status" value="1"/>
</dbReference>
<dbReference type="PROSITE" id="PS50862">
    <property type="entry name" value="AA_TRNA_LIGASE_II"/>
    <property type="match status" value="1"/>
</dbReference>
<proteinExistence type="inferred from homology"/>